<accession>Q67XT3</accession>
<accession>Q9SR88</accession>
<organism>
    <name type="scientific">Arabidopsis thaliana</name>
    <name type="common">Mouse-ear cress</name>
    <dbReference type="NCBI Taxonomy" id="3702"/>
    <lineage>
        <taxon>Eukaryota</taxon>
        <taxon>Viridiplantae</taxon>
        <taxon>Streptophyta</taxon>
        <taxon>Embryophyta</taxon>
        <taxon>Tracheophyta</taxon>
        <taxon>Spermatophyta</taxon>
        <taxon>Magnoliopsida</taxon>
        <taxon>eudicotyledons</taxon>
        <taxon>Gunneridae</taxon>
        <taxon>Pentapetalae</taxon>
        <taxon>rosids</taxon>
        <taxon>malvids</taxon>
        <taxon>Brassicales</taxon>
        <taxon>Brassicaceae</taxon>
        <taxon>Camelineae</taxon>
        <taxon>Arabidopsis</taxon>
    </lineage>
</organism>
<feature type="chain" id="PRO_0000444101" description="Kinetochore protein SPC24 homolog">
    <location>
        <begin position="1"/>
        <end position="201"/>
    </location>
</feature>
<feature type="coiled-coil region" evidence="1">
    <location>
        <begin position="78"/>
        <end position="133"/>
    </location>
</feature>
<dbReference type="EMBL" id="AC010871">
    <property type="protein sequence ID" value="AAF07836.1"/>
    <property type="status" value="ALT_SEQ"/>
    <property type="molecule type" value="Genomic_DNA"/>
</dbReference>
<dbReference type="EMBL" id="CP002686">
    <property type="protein sequence ID" value="AEE74690.1"/>
    <property type="molecule type" value="Genomic_DNA"/>
</dbReference>
<dbReference type="EMBL" id="AK175522">
    <property type="protein sequence ID" value="BAD43285.1"/>
    <property type="molecule type" value="mRNA"/>
</dbReference>
<dbReference type="EMBL" id="AK176735">
    <property type="protein sequence ID" value="BAD44498.1"/>
    <property type="molecule type" value="mRNA"/>
</dbReference>
<dbReference type="EMBL" id="BT010497">
    <property type="protein sequence ID" value="AAQ65120.1"/>
    <property type="molecule type" value="mRNA"/>
</dbReference>
<dbReference type="RefSeq" id="NP_187500.2">
    <property type="nucleotide sequence ID" value="NM_111722.3"/>
</dbReference>
<dbReference type="SMR" id="Q67XT3"/>
<dbReference type="FunCoup" id="Q67XT3">
    <property type="interactions" value="169"/>
</dbReference>
<dbReference type="IntAct" id="Q67XT3">
    <property type="interactions" value="1"/>
</dbReference>
<dbReference type="STRING" id="3702.Q67XT3"/>
<dbReference type="iPTMnet" id="Q67XT3"/>
<dbReference type="PaxDb" id="3702-AT3G08880.1"/>
<dbReference type="ProteomicsDB" id="232615"/>
<dbReference type="DNASU" id="820036"/>
<dbReference type="EnsemblPlants" id="AT3G08880.1">
    <property type="protein sequence ID" value="AT3G08880.1"/>
    <property type="gene ID" value="AT3G08880"/>
</dbReference>
<dbReference type="GeneID" id="820036"/>
<dbReference type="Gramene" id="AT3G08880.1">
    <property type="protein sequence ID" value="AT3G08880.1"/>
    <property type="gene ID" value="AT3G08880"/>
</dbReference>
<dbReference type="KEGG" id="ath:AT3G08880"/>
<dbReference type="Araport" id="AT3G08880"/>
<dbReference type="TAIR" id="AT3G08880">
    <property type="gene designation" value="MUN"/>
</dbReference>
<dbReference type="eggNOG" id="ENOG502S0WN">
    <property type="taxonomic scope" value="Eukaryota"/>
</dbReference>
<dbReference type="HOGENOM" id="CLU_117840_0_0_1"/>
<dbReference type="InParanoid" id="Q67XT3"/>
<dbReference type="OMA" id="MYASITN"/>
<dbReference type="PhylomeDB" id="Q67XT3"/>
<dbReference type="PRO" id="PR:Q67XT3"/>
<dbReference type="Proteomes" id="UP000006548">
    <property type="component" value="Chromosome 3"/>
</dbReference>
<dbReference type="ExpressionAtlas" id="Q67XT3">
    <property type="expression patterns" value="baseline and differential"/>
</dbReference>
<dbReference type="GO" id="GO:0000776">
    <property type="term" value="C:kinetochore"/>
    <property type="evidence" value="ECO:0000314"/>
    <property type="project" value="TAIR"/>
</dbReference>
<dbReference type="GO" id="GO:0031262">
    <property type="term" value="C:Ndc80 complex"/>
    <property type="evidence" value="ECO:0000250"/>
    <property type="project" value="UniProtKB"/>
</dbReference>
<dbReference type="GO" id="GO:0005634">
    <property type="term" value="C:nucleus"/>
    <property type="evidence" value="ECO:0000314"/>
    <property type="project" value="TAIR"/>
</dbReference>
<dbReference type="GO" id="GO:0051301">
    <property type="term" value="P:cell division"/>
    <property type="evidence" value="ECO:0007669"/>
    <property type="project" value="UniProtKB-KW"/>
</dbReference>
<dbReference type="GO" id="GO:0009933">
    <property type="term" value="P:meristem structural organization"/>
    <property type="evidence" value="ECO:0000315"/>
    <property type="project" value="TAIR"/>
</dbReference>
<dbReference type="GO" id="GO:0051781">
    <property type="term" value="P:positive regulation of cell division"/>
    <property type="evidence" value="ECO:0000315"/>
    <property type="project" value="TAIR"/>
</dbReference>
<dbReference type="GO" id="GO:0051983">
    <property type="term" value="P:regulation of chromosome segregation"/>
    <property type="evidence" value="ECO:0000315"/>
    <property type="project" value="TAIR"/>
</dbReference>
<dbReference type="Gene3D" id="3.30.160.570">
    <property type="entry name" value="Ncd80 complex, Spc24 subunit"/>
    <property type="match status" value="1"/>
</dbReference>
<dbReference type="InterPro" id="IPR044951">
    <property type="entry name" value="SPC24-like"/>
</dbReference>
<dbReference type="PANTHER" id="PTHR35730">
    <property type="entry name" value="KINETOCHORE PROTEIN SPC24 HOMOLOG-RELATED"/>
    <property type="match status" value="1"/>
</dbReference>
<dbReference type="PANTHER" id="PTHR35730:SF2">
    <property type="entry name" value="KINETOCHORE PROTEIN SPC24 HOMOLOG-RELATED"/>
    <property type="match status" value="1"/>
</dbReference>
<keyword id="KW-0131">Cell cycle</keyword>
<keyword id="KW-0132">Cell division</keyword>
<keyword id="KW-0137">Centromere</keyword>
<keyword id="KW-0158">Chromosome</keyword>
<keyword id="KW-0175">Coiled coil</keyword>
<keyword id="KW-0498">Mitosis</keyword>
<keyword id="KW-1185">Reference proteome</keyword>
<gene>
    <name evidence="3" type="primary">SPC24</name>
    <name evidence="3" type="synonym">MUN</name>
    <name evidence="5" type="ordered locus">At3g08880</name>
    <name evidence="6" type="ORF">T16O11.19</name>
</gene>
<protein>
    <recommendedName>
        <fullName evidence="3">Kinetochore protein SPC24 homolog</fullName>
        <shortName evidence="3">AtSPC24</shortName>
    </recommendedName>
    <alternativeName>
        <fullName evidence="3">Protein MERISTEM UNSTRUCTURED</fullName>
    </alternativeName>
</protein>
<name>SPC24_ARATH</name>
<evidence type="ECO:0000255" key="1"/>
<evidence type="ECO:0000269" key="2">
    <source>
    </source>
</evidence>
<evidence type="ECO:0000303" key="3">
    <source>
    </source>
</evidence>
<evidence type="ECO:0000305" key="4"/>
<evidence type="ECO:0000312" key="5">
    <source>
        <dbReference type="Araport" id="AT3G08880"/>
    </source>
</evidence>
<evidence type="ECO:0000312" key="6">
    <source>
        <dbReference type="EMBL" id="AAF07836.1"/>
    </source>
</evidence>
<reference key="1">
    <citation type="journal article" date="2000" name="Nature">
        <title>Sequence and analysis of chromosome 3 of the plant Arabidopsis thaliana.</title>
        <authorList>
            <person name="Salanoubat M."/>
            <person name="Lemcke K."/>
            <person name="Rieger M."/>
            <person name="Ansorge W."/>
            <person name="Unseld M."/>
            <person name="Fartmann B."/>
            <person name="Valle G."/>
            <person name="Bloecker H."/>
            <person name="Perez-Alonso M."/>
            <person name="Obermaier B."/>
            <person name="Delseny M."/>
            <person name="Boutry M."/>
            <person name="Grivell L.A."/>
            <person name="Mache R."/>
            <person name="Puigdomenech P."/>
            <person name="De Simone V."/>
            <person name="Choisne N."/>
            <person name="Artiguenave F."/>
            <person name="Robert C."/>
            <person name="Brottier P."/>
            <person name="Wincker P."/>
            <person name="Cattolico L."/>
            <person name="Weissenbach J."/>
            <person name="Saurin W."/>
            <person name="Quetier F."/>
            <person name="Schaefer M."/>
            <person name="Mueller-Auer S."/>
            <person name="Gabel C."/>
            <person name="Fuchs M."/>
            <person name="Benes V."/>
            <person name="Wurmbach E."/>
            <person name="Drzonek H."/>
            <person name="Erfle H."/>
            <person name="Jordan N."/>
            <person name="Bangert S."/>
            <person name="Wiedelmann R."/>
            <person name="Kranz H."/>
            <person name="Voss H."/>
            <person name="Holland R."/>
            <person name="Brandt P."/>
            <person name="Nyakatura G."/>
            <person name="Vezzi A."/>
            <person name="D'Angelo M."/>
            <person name="Pallavicini A."/>
            <person name="Toppo S."/>
            <person name="Simionati B."/>
            <person name="Conrad A."/>
            <person name="Hornischer K."/>
            <person name="Kauer G."/>
            <person name="Loehnert T.-H."/>
            <person name="Nordsiek G."/>
            <person name="Reichelt J."/>
            <person name="Scharfe M."/>
            <person name="Schoen O."/>
            <person name="Bargues M."/>
            <person name="Terol J."/>
            <person name="Climent J."/>
            <person name="Navarro P."/>
            <person name="Collado C."/>
            <person name="Perez-Perez A."/>
            <person name="Ottenwaelder B."/>
            <person name="Duchemin D."/>
            <person name="Cooke R."/>
            <person name="Laudie M."/>
            <person name="Berger-Llauro C."/>
            <person name="Purnelle B."/>
            <person name="Masuy D."/>
            <person name="de Haan M."/>
            <person name="Maarse A.C."/>
            <person name="Alcaraz J.-P."/>
            <person name="Cottet A."/>
            <person name="Casacuberta E."/>
            <person name="Monfort A."/>
            <person name="Argiriou A."/>
            <person name="Flores M."/>
            <person name="Liguori R."/>
            <person name="Vitale D."/>
            <person name="Mannhaupt G."/>
            <person name="Haase D."/>
            <person name="Schoof H."/>
            <person name="Rudd S."/>
            <person name="Zaccaria P."/>
            <person name="Mewes H.-W."/>
            <person name="Mayer K.F.X."/>
            <person name="Kaul S."/>
            <person name="Town C.D."/>
            <person name="Koo H.L."/>
            <person name="Tallon L.J."/>
            <person name="Jenkins J."/>
            <person name="Rooney T."/>
            <person name="Rizzo M."/>
            <person name="Walts A."/>
            <person name="Utterback T."/>
            <person name="Fujii C.Y."/>
            <person name="Shea T.P."/>
            <person name="Creasy T.H."/>
            <person name="Haas B."/>
            <person name="Maiti R."/>
            <person name="Wu D."/>
            <person name="Peterson J."/>
            <person name="Van Aken S."/>
            <person name="Pai G."/>
            <person name="Militscher J."/>
            <person name="Sellers P."/>
            <person name="Gill J.E."/>
            <person name="Feldblyum T.V."/>
            <person name="Preuss D."/>
            <person name="Lin X."/>
            <person name="Nierman W.C."/>
            <person name="Salzberg S.L."/>
            <person name="White O."/>
            <person name="Venter J.C."/>
            <person name="Fraser C.M."/>
            <person name="Kaneko T."/>
            <person name="Nakamura Y."/>
            <person name="Sato S."/>
            <person name="Kato T."/>
            <person name="Asamizu E."/>
            <person name="Sasamoto S."/>
            <person name="Kimura T."/>
            <person name="Idesawa K."/>
            <person name="Kawashima K."/>
            <person name="Kishida Y."/>
            <person name="Kiyokawa C."/>
            <person name="Kohara M."/>
            <person name="Matsumoto M."/>
            <person name="Matsuno A."/>
            <person name="Muraki A."/>
            <person name="Nakayama S."/>
            <person name="Nakazaki N."/>
            <person name="Shinpo S."/>
            <person name="Takeuchi C."/>
            <person name="Wada T."/>
            <person name="Watanabe A."/>
            <person name="Yamada M."/>
            <person name="Yasuda M."/>
            <person name="Tabata S."/>
        </authorList>
    </citation>
    <scope>NUCLEOTIDE SEQUENCE [LARGE SCALE GENOMIC DNA]</scope>
    <source>
        <strain>cv. Columbia</strain>
    </source>
</reference>
<reference key="2">
    <citation type="journal article" date="2017" name="Plant J.">
        <title>Araport11: a complete reannotation of the Arabidopsis thaliana reference genome.</title>
        <authorList>
            <person name="Cheng C.Y."/>
            <person name="Krishnakumar V."/>
            <person name="Chan A.P."/>
            <person name="Thibaud-Nissen F."/>
            <person name="Schobel S."/>
            <person name="Town C.D."/>
        </authorList>
    </citation>
    <scope>GENOME REANNOTATION</scope>
    <source>
        <strain>cv. Columbia</strain>
    </source>
</reference>
<reference key="3">
    <citation type="submission" date="2004-09" db="EMBL/GenBank/DDBJ databases">
        <title>Large-scale analysis of RIKEN Arabidopsis full-length (RAFL) cDNAs.</title>
        <authorList>
            <person name="Totoki Y."/>
            <person name="Seki M."/>
            <person name="Ishida J."/>
            <person name="Nakajima M."/>
            <person name="Enju A."/>
            <person name="Kamiya A."/>
            <person name="Narusaka M."/>
            <person name="Shin-i T."/>
            <person name="Nakagawa M."/>
            <person name="Sakamoto N."/>
            <person name="Oishi K."/>
            <person name="Kohara Y."/>
            <person name="Kobayashi M."/>
            <person name="Toyoda A."/>
            <person name="Sakaki Y."/>
            <person name="Sakurai T."/>
            <person name="Iida K."/>
            <person name="Akiyama K."/>
            <person name="Satou M."/>
            <person name="Toyoda T."/>
            <person name="Konagaya A."/>
            <person name="Carninci P."/>
            <person name="Kawai J."/>
            <person name="Hayashizaki Y."/>
            <person name="Shinozaki K."/>
        </authorList>
    </citation>
    <scope>NUCLEOTIDE SEQUENCE [LARGE SCALE MRNA]</scope>
    <source>
        <strain>cv. Columbia</strain>
    </source>
</reference>
<reference key="4">
    <citation type="journal article" date="2003" name="Science">
        <title>Empirical analysis of transcriptional activity in the Arabidopsis genome.</title>
        <authorList>
            <person name="Yamada K."/>
            <person name="Lim J."/>
            <person name="Dale J.M."/>
            <person name="Chen H."/>
            <person name="Shinn P."/>
            <person name="Palm C.J."/>
            <person name="Southwick A.M."/>
            <person name="Wu H.C."/>
            <person name="Kim C.J."/>
            <person name="Nguyen M."/>
            <person name="Pham P.K."/>
            <person name="Cheuk R.F."/>
            <person name="Karlin-Newmann G."/>
            <person name="Liu S.X."/>
            <person name="Lam B."/>
            <person name="Sakano H."/>
            <person name="Wu T."/>
            <person name="Yu G."/>
            <person name="Miranda M."/>
            <person name="Quach H.L."/>
            <person name="Tripp M."/>
            <person name="Chang C.H."/>
            <person name="Lee J.M."/>
            <person name="Toriumi M.J."/>
            <person name="Chan M.M."/>
            <person name="Tang C.C."/>
            <person name="Onodera C.S."/>
            <person name="Deng J.M."/>
            <person name="Akiyama K."/>
            <person name="Ansari Y."/>
            <person name="Arakawa T."/>
            <person name="Banh J."/>
            <person name="Banno F."/>
            <person name="Bowser L."/>
            <person name="Brooks S.Y."/>
            <person name="Carninci P."/>
            <person name="Chao Q."/>
            <person name="Choy N."/>
            <person name="Enju A."/>
            <person name="Goldsmith A.D."/>
            <person name="Gurjal M."/>
            <person name="Hansen N.F."/>
            <person name="Hayashizaki Y."/>
            <person name="Johnson-Hopson C."/>
            <person name="Hsuan V.W."/>
            <person name="Iida K."/>
            <person name="Karnes M."/>
            <person name="Khan S."/>
            <person name="Koesema E."/>
            <person name="Ishida J."/>
            <person name="Jiang P.X."/>
            <person name="Jones T."/>
            <person name="Kawai J."/>
            <person name="Kamiya A."/>
            <person name="Meyers C."/>
            <person name="Nakajima M."/>
            <person name="Narusaka M."/>
            <person name="Seki M."/>
            <person name="Sakurai T."/>
            <person name="Satou M."/>
            <person name="Tamse R."/>
            <person name="Vaysberg M."/>
            <person name="Wallender E.K."/>
            <person name="Wong C."/>
            <person name="Yamamura Y."/>
            <person name="Yuan S."/>
            <person name="Shinozaki K."/>
            <person name="Davis R.W."/>
            <person name="Theologis A."/>
            <person name="Ecker J.R."/>
        </authorList>
    </citation>
    <scope>NUCLEOTIDE SEQUENCE [LARGE SCALE MRNA] OF 1-107</scope>
    <source>
        <strain>cv. Columbia</strain>
    </source>
</reference>
<reference key="5">
    <citation type="journal article" date="2018" name="Plant J.">
        <title>MUN (MERISTEM UNSTRUCTURED), encoding a SPC24 homolog of NDC80 kinetochore complex, affects development through cell division in Arabidopsis thaliana.</title>
        <authorList>
            <person name="Shin J."/>
            <person name="Jeong G."/>
            <person name="Park J.Y."/>
            <person name="Kim H."/>
            <person name="Lee I."/>
        </authorList>
    </citation>
    <scope>FUNCTION</scope>
    <scope>SUBUNIT</scope>
    <scope>SUBCELLULAR LOCATION</scope>
    <scope>TISSUE SPECIFICITY</scope>
    <scope>DISRUPTION PHENOTYPE</scope>
</reference>
<sequence>MGNASENFDIEDLMSYGDDLINLLNVKNGFDIISQSSEQFKALNFACHEDFNQIQGSIEDCKTKLYACKKKTEEAYSDIAAEDEIERLQKELDEEMEREFKLKDELRLVADELKDLNAQLSSIDEHKQSTKRKVRDDLRAEKKLSMYASVTNVIPDIDDPSKISGYMVDREKRLIEKFQFETNKMTAYETCNSIWSIINKQ</sequence>
<comment type="function">
    <text evidence="2">Acts as a component of the essential kinetochore-associated NDC80 complex, which is required for chromosome segregation and spindle checkpoint activity to ensure proper cell division. Required for the maintenance of plant architecture.</text>
</comment>
<comment type="subunit">
    <text evidence="2">Component of the NDC80 complex, which consists of NDC80, NUF2, SPC24 and SPC25.</text>
</comment>
<comment type="subcellular location">
    <subcellularLocation>
        <location evidence="2">Chromosome</location>
        <location evidence="2">Centromere</location>
    </subcellularLocation>
    <text evidence="2">Colocalizes with CENH3 at the centromere.</text>
</comment>
<comment type="tissue specificity">
    <text evidence="2">Highly expressed in actively dividing tissues, such as shoot apical meristem (SAM), root apical meristem (RAM), vasculature, newly emerging leaves and inflorescence shoots.</text>
</comment>
<comment type="disruption phenotype">
    <text evidence="2">Embryonic lethality due to division arrest before the globular stage.</text>
</comment>
<comment type="similarity">
    <text evidence="4">Belongs to the SPC24 family.</text>
</comment>
<comment type="sequence caution" evidence="4">
    <conflict type="erroneous gene model prediction">
        <sequence resource="EMBL-CDS" id="AAF07836"/>
    </conflict>
</comment>
<proteinExistence type="evidence at protein level"/>